<protein>
    <recommendedName>
        <fullName>Dual specificity protein phosphatase 1</fullName>
        <shortName>AtDsPTP1</shortName>
        <ecNumber>3.1.3.16</ecNumber>
        <ecNumber>3.1.3.48</ecNumber>
    </recommendedName>
</protein>
<dbReference type="EC" id="3.1.3.16"/>
<dbReference type="EC" id="3.1.3.48"/>
<dbReference type="EMBL" id="Y18620">
    <property type="protein sequence ID" value="CAA77232.1"/>
    <property type="molecule type" value="mRNA"/>
</dbReference>
<dbReference type="EMBL" id="AB023036">
    <property type="protein sequence ID" value="BAB02780.1"/>
    <property type="status" value="ALT_SEQ"/>
    <property type="molecule type" value="Genomic_DNA"/>
</dbReference>
<dbReference type="EMBL" id="CP002686">
    <property type="protein sequence ID" value="AEE76784.1"/>
    <property type="molecule type" value="Genomic_DNA"/>
</dbReference>
<dbReference type="EMBL" id="CP002686">
    <property type="protein sequence ID" value="AEE76785.1"/>
    <property type="molecule type" value="Genomic_DNA"/>
</dbReference>
<dbReference type="EMBL" id="CP002686">
    <property type="protein sequence ID" value="AEE76786.1"/>
    <property type="molecule type" value="Genomic_DNA"/>
</dbReference>
<dbReference type="RefSeq" id="NP_001118683.1">
    <molecule id="Q9ZR37-2"/>
    <property type="nucleotide sequence ID" value="NM_001125211.3"/>
</dbReference>
<dbReference type="RefSeq" id="NP_001189955.1">
    <molecule id="Q9ZR37-3"/>
    <property type="nucleotide sequence ID" value="NM_001203026.1"/>
</dbReference>
<dbReference type="RefSeq" id="NP_189003.1">
    <molecule id="Q9ZR37-1"/>
    <property type="nucleotide sequence ID" value="NM_113265.1"/>
</dbReference>
<dbReference type="SMR" id="Q9ZR37"/>
<dbReference type="BioGRID" id="7273">
    <property type="interactions" value="11"/>
</dbReference>
<dbReference type="FunCoup" id="Q9ZR37">
    <property type="interactions" value="2014"/>
</dbReference>
<dbReference type="IntAct" id="Q9ZR37">
    <property type="interactions" value="10"/>
</dbReference>
<dbReference type="STRING" id="3702.Q9ZR37"/>
<dbReference type="iPTMnet" id="Q9ZR37"/>
<dbReference type="PaxDb" id="3702-AT3G23610.3"/>
<dbReference type="ProteomicsDB" id="222229">
    <molecule id="Q9ZR37-1"/>
</dbReference>
<dbReference type="EnsemblPlants" id="AT3G23610.1">
    <molecule id="Q9ZR37-1"/>
    <property type="protein sequence ID" value="AT3G23610.1"/>
    <property type="gene ID" value="AT3G23610"/>
</dbReference>
<dbReference type="EnsemblPlants" id="AT3G23610.2">
    <molecule id="Q9ZR37-2"/>
    <property type="protein sequence ID" value="AT3G23610.2"/>
    <property type="gene ID" value="AT3G23610"/>
</dbReference>
<dbReference type="EnsemblPlants" id="AT3G23610.3">
    <molecule id="Q9ZR37-3"/>
    <property type="protein sequence ID" value="AT3G23610.3"/>
    <property type="gene ID" value="AT3G23610"/>
</dbReference>
<dbReference type="GeneID" id="821941"/>
<dbReference type="Gramene" id="AT3G23610.1">
    <molecule id="Q9ZR37-1"/>
    <property type="protein sequence ID" value="AT3G23610.1"/>
    <property type="gene ID" value="AT3G23610"/>
</dbReference>
<dbReference type="Gramene" id="AT3G23610.2">
    <molecule id="Q9ZR37-2"/>
    <property type="protein sequence ID" value="AT3G23610.2"/>
    <property type="gene ID" value="AT3G23610"/>
</dbReference>
<dbReference type="Gramene" id="AT3G23610.3">
    <molecule id="Q9ZR37-3"/>
    <property type="protein sequence ID" value="AT3G23610.3"/>
    <property type="gene ID" value="AT3G23610"/>
</dbReference>
<dbReference type="KEGG" id="ath:AT3G23610"/>
<dbReference type="Araport" id="AT3G23610"/>
<dbReference type="TAIR" id="AT3G23610">
    <property type="gene designation" value="DSPTP1"/>
</dbReference>
<dbReference type="eggNOG" id="KOG1716">
    <property type="taxonomic scope" value="Eukaryota"/>
</dbReference>
<dbReference type="InParanoid" id="Q9ZR37"/>
<dbReference type="OMA" id="CAYLMWK"/>
<dbReference type="PhylomeDB" id="Q9ZR37"/>
<dbReference type="PRO" id="PR:Q9ZR37"/>
<dbReference type="Proteomes" id="UP000006548">
    <property type="component" value="Chromosome 3"/>
</dbReference>
<dbReference type="ExpressionAtlas" id="Q9ZR37">
    <property type="expression patterns" value="baseline and differential"/>
</dbReference>
<dbReference type="GO" id="GO:0005737">
    <property type="term" value="C:cytoplasm"/>
    <property type="evidence" value="ECO:0007669"/>
    <property type="project" value="UniProtKB-SubCell"/>
</dbReference>
<dbReference type="GO" id="GO:0005634">
    <property type="term" value="C:nucleus"/>
    <property type="evidence" value="ECO:0007669"/>
    <property type="project" value="UniProtKB-SubCell"/>
</dbReference>
<dbReference type="GO" id="GO:0005516">
    <property type="term" value="F:calmodulin binding"/>
    <property type="evidence" value="ECO:0000314"/>
    <property type="project" value="TAIR"/>
</dbReference>
<dbReference type="GO" id="GO:0004722">
    <property type="term" value="F:protein serine/threonine phosphatase activity"/>
    <property type="evidence" value="ECO:0007669"/>
    <property type="project" value="UniProtKB-EC"/>
</dbReference>
<dbReference type="GO" id="GO:0004725">
    <property type="term" value="F:protein tyrosine phosphatase activity"/>
    <property type="evidence" value="ECO:0007669"/>
    <property type="project" value="UniProtKB-EC"/>
</dbReference>
<dbReference type="GO" id="GO:0008138">
    <property type="term" value="F:protein tyrosine/serine/threonine phosphatase activity"/>
    <property type="evidence" value="ECO:0000314"/>
    <property type="project" value="UniProtKB"/>
</dbReference>
<dbReference type="GO" id="GO:0006470">
    <property type="term" value="P:protein dephosphorylation"/>
    <property type="evidence" value="ECO:0000314"/>
    <property type="project" value="TAIR"/>
</dbReference>
<dbReference type="CDD" id="cd14498">
    <property type="entry name" value="DSP"/>
    <property type="match status" value="1"/>
</dbReference>
<dbReference type="FunFam" id="3.90.190.10:FF:000056">
    <property type="entry name" value="Dual specificity phosphatase 12"/>
    <property type="match status" value="1"/>
</dbReference>
<dbReference type="Gene3D" id="3.90.190.10">
    <property type="entry name" value="Protein tyrosine phosphatase superfamily"/>
    <property type="match status" value="1"/>
</dbReference>
<dbReference type="InterPro" id="IPR000340">
    <property type="entry name" value="Dual-sp_phosphatase_cat-dom"/>
</dbReference>
<dbReference type="InterPro" id="IPR029021">
    <property type="entry name" value="Prot-tyrosine_phosphatase-like"/>
</dbReference>
<dbReference type="InterPro" id="IPR000387">
    <property type="entry name" value="Tyr_Pase_dom"/>
</dbReference>
<dbReference type="InterPro" id="IPR020422">
    <property type="entry name" value="TYR_PHOSPHATASE_DUAL_dom"/>
</dbReference>
<dbReference type="PANTHER" id="PTHR10159">
    <property type="entry name" value="DUAL SPECIFICITY PROTEIN PHOSPHATASE"/>
    <property type="match status" value="1"/>
</dbReference>
<dbReference type="PANTHER" id="PTHR10159:SF511">
    <property type="entry name" value="DUAL SPECIFICITY PROTEIN PHOSPHATASE 1"/>
    <property type="match status" value="1"/>
</dbReference>
<dbReference type="Pfam" id="PF00782">
    <property type="entry name" value="DSPc"/>
    <property type="match status" value="1"/>
</dbReference>
<dbReference type="PRINTS" id="PR01908">
    <property type="entry name" value="ADSPHPHTASE"/>
</dbReference>
<dbReference type="SMART" id="SM00195">
    <property type="entry name" value="DSPc"/>
    <property type="match status" value="1"/>
</dbReference>
<dbReference type="SUPFAM" id="SSF52799">
    <property type="entry name" value="(Phosphotyrosine protein) phosphatases II"/>
    <property type="match status" value="1"/>
</dbReference>
<dbReference type="PROSITE" id="PS50056">
    <property type="entry name" value="TYR_PHOSPHATASE_2"/>
    <property type="match status" value="1"/>
</dbReference>
<dbReference type="PROSITE" id="PS50054">
    <property type="entry name" value="TYR_PHOSPHATASE_DUAL"/>
    <property type="match status" value="1"/>
</dbReference>
<name>DUS1_ARATH</name>
<evidence type="ECO:0000250" key="1"/>
<evidence type="ECO:0000255" key="2">
    <source>
        <dbReference type="PROSITE-ProRule" id="PRU00160"/>
    </source>
</evidence>
<evidence type="ECO:0000256" key="3">
    <source>
        <dbReference type="SAM" id="MobiDB-lite"/>
    </source>
</evidence>
<evidence type="ECO:0000269" key="4">
    <source>
    </source>
</evidence>
<evidence type="ECO:0000269" key="5">
    <source>
    </source>
</evidence>
<evidence type="ECO:0000305" key="6"/>
<comment type="function">
    <text evidence="4">Has a dual specificity toward Ser/Thr and Tyr-containing proteins. Dephosphorylates MPK4 in vitro.</text>
</comment>
<comment type="catalytic activity">
    <reaction>
        <text>O-phospho-L-tyrosyl-[protein] + H2O = L-tyrosyl-[protein] + phosphate</text>
        <dbReference type="Rhea" id="RHEA:10684"/>
        <dbReference type="Rhea" id="RHEA-COMP:10136"/>
        <dbReference type="Rhea" id="RHEA-COMP:20101"/>
        <dbReference type="ChEBI" id="CHEBI:15377"/>
        <dbReference type="ChEBI" id="CHEBI:43474"/>
        <dbReference type="ChEBI" id="CHEBI:46858"/>
        <dbReference type="ChEBI" id="CHEBI:61978"/>
        <dbReference type="EC" id="3.1.3.48"/>
    </reaction>
</comment>
<comment type="catalytic activity">
    <reaction>
        <text>O-phospho-L-seryl-[protein] + H2O = L-seryl-[protein] + phosphate</text>
        <dbReference type="Rhea" id="RHEA:20629"/>
        <dbReference type="Rhea" id="RHEA-COMP:9863"/>
        <dbReference type="Rhea" id="RHEA-COMP:11604"/>
        <dbReference type="ChEBI" id="CHEBI:15377"/>
        <dbReference type="ChEBI" id="CHEBI:29999"/>
        <dbReference type="ChEBI" id="CHEBI:43474"/>
        <dbReference type="ChEBI" id="CHEBI:83421"/>
        <dbReference type="EC" id="3.1.3.16"/>
    </reaction>
</comment>
<comment type="catalytic activity">
    <reaction>
        <text>O-phospho-L-threonyl-[protein] + H2O = L-threonyl-[protein] + phosphate</text>
        <dbReference type="Rhea" id="RHEA:47004"/>
        <dbReference type="Rhea" id="RHEA-COMP:11060"/>
        <dbReference type="Rhea" id="RHEA-COMP:11605"/>
        <dbReference type="ChEBI" id="CHEBI:15377"/>
        <dbReference type="ChEBI" id="CHEBI:30013"/>
        <dbReference type="ChEBI" id="CHEBI:43474"/>
        <dbReference type="ChEBI" id="CHEBI:61977"/>
        <dbReference type="EC" id="3.1.3.16"/>
    </reaction>
</comment>
<comment type="activity regulation">
    <text evidence="4">Inhibited by sodium vanadate and sodium tungstate. NaF and spermifine repress specifically phosphoserine and phosphothreonine phosphatase activity.</text>
</comment>
<comment type="subunit">
    <text evidence="5">Interacts with calmodulin (CaM) in a calcium Ca(2+)-dependent manner.</text>
</comment>
<comment type="interaction">
    <interactant intactId="EBI-25512239">
        <id>Q9ZR37</id>
    </interactant>
    <interactant intactId="EBI-1100687">
        <id>Q9ZNV8</id>
        <label>AHP2</label>
    </interactant>
    <organismsDiffer>false</organismsDiffer>
    <experiments>3</experiments>
</comment>
<comment type="interaction">
    <interactant intactId="EBI-25512239">
        <id>Q9ZR37</id>
    </interactant>
    <interactant intactId="EBI-25516605">
        <id>A0A178WKP3</id>
        <label>AXX17_At1g14230</label>
    </interactant>
    <organismsDiffer>false</organismsDiffer>
    <experiments>3</experiments>
</comment>
<comment type="interaction">
    <interactant intactId="EBI-25512239">
        <id>Q9ZR37</id>
    </interactant>
    <interactant intactId="EBI-16967606">
        <id>Q9FJ55</id>
        <label>CIPK19</label>
    </interactant>
    <organismsDiffer>false</organismsDiffer>
    <experiments>3</experiments>
</comment>
<comment type="interaction">
    <interactant intactId="EBI-25512239">
        <id>Q9ZR37</id>
    </interactant>
    <interactant intactId="EBI-4466510">
        <id>Q84WK5</id>
        <label>GID8</label>
    </interactant>
    <organismsDiffer>false</organismsDiffer>
    <experiments>3</experiments>
</comment>
<comment type="interaction">
    <interactant intactId="EBI-25512239">
        <id>Q9ZR37</id>
    </interactant>
    <interactant intactId="EBI-604555">
        <id>Q84JU4</id>
        <label>IBR5</label>
    </interactant>
    <organismsDiffer>false</organismsDiffer>
    <experiments>3</experiments>
</comment>
<comment type="interaction">
    <interactant intactId="EBI-25512239">
        <id>Q9ZR37</id>
    </interactant>
    <interactant intactId="EBI-994350">
        <id>Q9S7U9</id>
        <label>MKK2</label>
    </interactant>
    <organismsDiffer>false</organismsDiffer>
    <experiments>5</experiments>
</comment>
<comment type="interaction">
    <interactant intactId="EBI-25512239">
        <id>Q9ZR37</id>
    </interactant>
    <interactant intactId="EBI-25512915">
        <id>Q8GYH7</id>
        <label>MMS21</label>
    </interactant>
    <organismsDiffer>false</organismsDiffer>
    <experiments>3</experiments>
</comment>
<comment type="interaction">
    <interactant intactId="EBI-25512239">
        <id>Q9ZR37</id>
    </interactant>
    <interactant intactId="EBI-349526">
        <id>Q39023</id>
        <label>MPK3</label>
    </interactant>
    <organismsDiffer>false</organismsDiffer>
    <experiments>3</experiments>
</comment>
<comment type="interaction">
    <interactant intactId="EBI-25512239">
        <id>Q9ZR37</id>
    </interactant>
    <interactant intactId="EBI-15204858">
        <id>Q9FMC8</id>
        <label>OFP13</label>
    </interactant>
    <organismsDiffer>false</organismsDiffer>
    <experiments>3</experiments>
</comment>
<comment type="interaction">
    <interactant intactId="EBI-25512239">
        <id>Q9ZR37</id>
    </interactant>
    <interactant intactId="EBI-4470690">
        <id>Q93ZX1</id>
        <label>RFC4</label>
    </interactant>
    <organismsDiffer>false</organismsDiffer>
    <experiments>3</experiments>
</comment>
<comment type="subcellular location">
    <subcellularLocation>
        <location evidence="1">Nucleus</location>
    </subcellularLocation>
    <subcellularLocation>
        <location evidence="1">Cytoplasm</location>
    </subcellularLocation>
</comment>
<comment type="alternative products">
    <event type="alternative splicing"/>
    <isoform>
        <id>Q9ZR37-1</id>
        <name>1</name>
        <sequence type="displayed"/>
    </isoform>
    <isoform>
        <id>Q9ZR37-2</id>
        <name>2</name>
        <sequence type="described" ref="VSP_042412"/>
    </isoform>
    <isoform>
        <id>Q9ZR37-3</id>
        <name>3</name>
        <sequence type="described" ref="VSP_042413"/>
    </isoform>
</comment>
<comment type="tissue specificity">
    <text evidence="4">Expressed in roots, stems, leaves and flowers.</text>
</comment>
<comment type="similarity">
    <text evidence="6">Belongs to the protein-tyrosine phosphatase family. Non-receptor class dual specificity subfamily.</text>
</comment>
<comment type="sequence caution" evidence="6">
    <conflict type="erroneous gene model prediction">
        <sequence resource="EMBL-CDS" id="BAB02780"/>
    </conflict>
</comment>
<sequence length="198" mass="22017">MSSRDRGSPSSSSSSSSLPGIEKYNEKVKNQIQALVRVIKVARTYRDDNVPSLIEQGLYLGSVAAASNKNVLKSYNVTHILTVASSLRPAHPDDFVYKVVRVVDKEDTNLEMYFDECVDFIDEAKRQGGSVLVHCFVGKSRSVTIVVAYLMKKHGMTLAQALQHVKSKRPVASPNAGFIRQLQDLEKSMQVSDQFFSF</sequence>
<organism>
    <name type="scientific">Arabidopsis thaliana</name>
    <name type="common">Mouse-ear cress</name>
    <dbReference type="NCBI Taxonomy" id="3702"/>
    <lineage>
        <taxon>Eukaryota</taxon>
        <taxon>Viridiplantae</taxon>
        <taxon>Streptophyta</taxon>
        <taxon>Embryophyta</taxon>
        <taxon>Tracheophyta</taxon>
        <taxon>Spermatophyta</taxon>
        <taxon>Magnoliopsida</taxon>
        <taxon>eudicotyledons</taxon>
        <taxon>Gunneridae</taxon>
        <taxon>Pentapetalae</taxon>
        <taxon>rosids</taxon>
        <taxon>malvids</taxon>
        <taxon>Brassicales</taxon>
        <taxon>Brassicaceae</taxon>
        <taxon>Camelineae</taxon>
        <taxon>Arabidopsis</taxon>
    </lineage>
</organism>
<keyword id="KW-0025">Alternative splicing</keyword>
<keyword id="KW-0112">Calmodulin-binding</keyword>
<keyword id="KW-0963">Cytoplasm</keyword>
<keyword id="KW-0378">Hydrolase</keyword>
<keyword id="KW-0539">Nucleus</keyword>
<keyword id="KW-0904">Protein phosphatase</keyword>
<keyword id="KW-1185">Reference proteome</keyword>
<proteinExistence type="evidence at protein level"/>
<feature type="chain" id="PRO_0000415896" description="Dual specificity protein phosphatase 1">
    <location>
        <begin position="1"/>
        <end position="198"/>
    </location>
</feature>
<feature type="domain" description="Tyrosine-protein phosphatase" evidence="2">
    <location>
        <begin position="50"/>
        <end position="191"/>
    </location>
</feature>
<feature type="region of interest" description="Disordered" evidence="3">
    <location>
        <begin position="1"/>
        <end position="20"/>
    </location>
</feature>
<feature type="region of interest" description="CaM binding domain 1">
    <location>
        <begin position="26"/>
        <end position="47"/>
    </location>
</feature>
<feature type="region of interest" description="CaM binding domain 2">
    <location>
        <begin position="151"/>
        <end position="180"/>
    </location>
</feature>
<feature type="compositionally biased region" description="Low complexity" evidence="3">
    <location>
        <begin position="8"/>
        <end position="17"/>
    </location>
</feature>
<feature type="active site" description="Phosphocysteine intermediate" evidence="2">
    <location>
        <position position="135"/>
    </location>
</feature>
<feature type="splice variant" id="VSP_042412" description="In isoform 2." evidence="6">
    <original>VSDQFFSF</original>
    <variation>GKQVTIAQCQA</variation>
    <location>
        <begin position="191"/>
        <end position="198"/>
    </location>
</feature>
<feature type="splice variant" id="VSP_042413" description="In isoform 3." evidence="6">
    <original>SDQFFSF</original>
    <variation>VVEEKTVPCKYLLHASSFFSIKQGSKLRLHNVRREDH</variation>
    <location>
        <begin position="192"/>
        <end position="198"/>
    </location>
</feature>
<feature type="mutagenesis site" description="Impaired CaM binding and loss of phosphatase activity." evidence="5">
    <original>I</original>
    <variation>R</variation>
    <location>
        <position position="32"/>
    </location>
</feature>
<feature type="mutagenesis site" description="Impaired CaM binding." evidence="5">
    <original>L</original>
    <variation>R</variation>
    <location>
        <position position="35"/>
    </location>
</feature>
<feature type="mutagenesis site" description="Loss of phosphatase activity." evidence="4">
    <original>C</original>
    <variation>S</variation>
    <location>
        <position position="135"/>
    </location>
</feature>
<feature type="mutagenesis site" description="Impaired CaM binding." evidence="5">
    <original>K</original>
    <variation>E</variation>
    <location>
        <position position="166"/>
    </location>
</feature>
<reference key="1">
    <citation type="journal article" date="1998" name="Plant J.">
        <title>Identification of a dual-specificity protein phosphatase that inactivates a MAP kinase from Arabidopsis.</title>
        <authorList>
            <person name="Gupta R."/>
            <person name="Huang Y."/>
            <person name="Kieber J."/>
            <person name="Luan S."/>
        </authorList>
    </citation>
    <scope>NUCLEOTIDE SEQUENCE [MRNA] (ISOFORM 1)</scope>
    <scope>FUNCTION AS DUAL-SPECIFICITY PROTEIN PHOSPHATASE</scope>
    <scope>MUTAGENESIS OF CYS-135</scope>
    <scope>TISSUE SPECIFICITY</scope>
    <scope>ACTIVITY REGULATION</scope>
    <source>
        <strain>cv. Columbia</strain>
    </source>
</reference>
<reference key="2">
    <citation type="journal article" date="2000" name="DNA Res.">
        <title>Structural analysis of Arabidopsis thaliana chromosome 3. I. Sequence features of the regions of 4,504,864 bp covered by sixty P1 and TAC clones.</title>
        <authorList>
            <person name="Sato S."/>
            <person name="Nakamura Y."/>
            <person name="Kaneko T."/>
            <person name="Katoh T."/>
            <person name="Asamizu E."/>
            <person name="Tabata S."/>
        </authorList>
    </citation>
    <scope>NUCLEOTIDE SEQUENCE [LARGE SCALE GENOMIC DNA]</scope>
    <source>
        <strain>cv. Columbia</strain>
    </source>
</reference>
<reference key="3">
    <citation type="journal article" date="2017" name="Plant J.">
        <title>Araport11: a complete reannotation of the Arabidopsis thaliana reference genome.</title>
        <authorList>
            <person name="Cheng C.Y."/>
            <person name="Krishnakumar V."/>
            <person name="Chan A.P."/>
            <person name="Thibaud-Nissen F."/>
            <person name="Schobel S."/>
            <person name="Town C.D."/>
        </authorList>
    </citation>
    <scope>GENOME REANNOTATION</scope>
    <source>
        <strain>cv. Columbia</strain>
    </source>
</reference>
<reference key="4">
    <citation type="journal article" date="2004" name="J. Biol. Chem.">
        <title>Regulation of the dual specificity protein phosphatase, DsPTP1, through interactions with calmodulin.</title>
        <authorList>
            <person name="Yoo J.H."/>
            <person name="Cheong M.S."/>
            <person name="Park C.Y."/>
            <person name="Moon B.C."/>
            <person name="Kim M.C."/>
            <person name="Kang Y.H."/>
            <person name="Park H.C."/>
            <person name="Choi M.S."/>
            <person name="Lee J.H."/>
            <person name="Jung W.Y."/>
            <person name="Yoon H.W."/>
            <person name="Chung W.S."/>
            <person name="Lim C.O."/>
            <person name="Lee S.Y."/>
            <person name="Cho M.J."/>
        </authorList>
    </citation>
    <scope>INTERACTION WITH CALMODULIN</scope>
    <scope>MUTAGENESIS OF ILE-32; LEU-35 AND LYS-166</scope>
    <source>
        <strain>cv. Columbia</strain>
    </source>
</reference>
<gene>
    <name type="primary">DSPTP1</name>
    <name type="ordered locus">At3g23610</name>
    <name type="ORF">MDB19.10</name>
</gene>
<accession>Q9ZR37</accession>
<accession>B3H4F5</accession>
<accession>F4J449</accession>
<accession>Q9LUG6</accession>